<comment type="function">
    <text evidence="1">Component of the PeBoW complex, which is required for maturation of 28S and 5.8S ribosomal RNAs and formation of the 60S ribosome.</text>
</comment>
<comment type="subunit">
    <text evidence="1">Component of the PeBoW complex, composed of bop1, pes1 and wdr12. The complex is held together by bop1, which interacts with pes1 via its N-terminal domain and with wdr12 via a high-affinity interaction between the seven-bladed beta-propeller domains of the 2 proteins. The PeBoW complex associates with the 66S pre-ribosome. Interacts (via UBL domain) with mdn1 (via VWFA/MIDAS domain).</text>
</comment>
<comment type="subcellular location">
    <subcellularLocation>
        <location evidence="1">Nucleus</location>
        <location evidence="1">Nucleolus</location>
    </subcellularLocation>
    <subcellularLocation>
        <location evidence="1">Nucleus</location>
        <location evidence="1">Nucleoplasm</location>
    </subcellularLocation>
</comment>
<comment type="similarity">
    <text evidence="1">Belongs to the WD repeat WDR12/YTM1 family.</text>
</comment>
<reference key="1">
    <citation type="journal article" date="2010" name="BMC Genomics">
        <title>Salmo salar and Esox lucius full-length cDNA sequences reveal changes in evolutionary pressures on a post-tetraploidization genome.</title>
        <authorList>
            <person name="Leong J.S."/>
            <person name="Jantzen S.G."/>
            <person name="von Schalburg K.R."/>
            <person name="Cooper G.A."/>
            <person name="Messmer A.M."/>
            <person name="Liao N.Y."/>
            <person name="Munro S."/>
            <person name="Moore R."/>
            <person name="Holt R.A."/>
            <person name="Jones S.J."/>
            <person name="Davidson W.S."/>
            <person name="Koop B.F."/>
        </authorList>
    </citation>
    <scope>NUCLEOTIDE SEQUENCE [LARGE SCALE MRNA]</scope>
    <source>
        <tissue>White muscle</tissue>
    </source>
</reference>
<protein>
    <recommendedName>
        <fullName evidence="1">Ribosome biogenesis protein wdr12</fullName>
    </recommendedName>
    <alternativeName>
        <fullName evidence="1">WD repeat-containing protein 12</fullName>
    </alternativeName>
</protein>
<proteinExistence type="evidence at transcript level"/>
<sequence length="423" mass="47528">MSQLQTRFFTDNKKYSVDDVPFSIPAASEVQELSNVINKLLEAKNGSRSQIEFDFLVQGQFLRTSLSNHMEAEGISTEDVVEIEYVERFTAPQPEECMMHDDWISSVEADSEWILTGSYDKTAKIWSLEGKAVMTVAGHTDVVKDVAWVKRDGLTSLLLTASLDQTILLWEWNSERNKLKARHCCRGHAGSVDTIATDPTRTKFCSGSWDKMLKIWSAVATEEEEEEEEPPSRPRKKQKTEQLGLTRTPLMTLSGHNEAVSSVLWLDSEEICSASWDHTIRLWDAETGSVKTSLTGSKVFNHISYSPLCRRLASGSTDRHVRLWDPRSKDGSLVLLSLTSHSGWVTAVKWAPSHEHQLVSGSLDNLVKLWDTRSCKAPLYDVSAHEDKVLCVDWTDSRLMLSGGADNKLYTYRYTACETDAGA</sequence>
<dbReference type="EMBL" id="BT043626">
    <property type="protein sequence ID" value="ACH70741.1"/>
    <property type="molecule type" value="mRNA"/>
</dbReference>
<dbReference type="RefSeq" id="XP_014006656.1">
    <property type="nucleotide sequence ID" value="XM_014151181.1"/>
</dbReference>
<dbReference type="SMR" id="B5DG67"/>
<dbReference type="STRING" id="8030.ENSSSAP00000016985"/>
<dbReference type="PaxDb" id="8030-ENSSSAP00000016985"/>
<dbReference type="KEGG" id="sasa:106575042"/>
<dbReference type="Proteomes" id="UP000087266">
    <property type="component" value="Chromosome ssa16"/>
</dbReference>
<dbReference type="GO" id="GO:0005730">
    <property type="term" value="C:nucleolus"/>
    <property type="evidence" value="ECO:0000250"/>
    <property type="project" value="UniProtKB"/>
</dbReference>
<dbReference type="GO" id="GO:0005654">
    <property type="term" value="C:nucleoplasm"/>
    <property type="evidence" value="ECO:0000250"/>
    <property type="project" value="UniProtKB"/>
</dbReference>
<dbReference type="GO" id="GO:0070545">
    <property type="term" value="C:PeBoW complex"/>
    <property type="evidence" value="ECO:0000250"/>
    <property type="project" value="UniProtKB"/>
</dbReference>
<dbReference type="GO" id="GO:0030687">
    <property type="term" value="C:preribosome, large subunit precursor"/>
    <property type="evidence" value="ECO:0000250"/>
    <property type="project" value="UniProtKB"/>
</dbReference>
<dbReference type="GO" id="GO:0043021">
    <property type="term" value="F:ribonucleoprotein complex binding"/>
    <property type="evidence" value="ECO:0007669"/>
    <property type="project" value="UniProtKB-UniRule"/>
</dbReference>
<dbReference type="GO" id="GO:0000466">
    <property type="term" value="P:maturation of 5.8S rRNA from tricistronic rRNA transcript (SSU-rRNA, 5.8S rRNA, LSU-rRNA)"/>
    <property type="evidence" value="ECO:0000250"/>
    <property type="project" value="UniProtKB"/>
</dbReference>
<dbReference type="GO" id="GO:0000463">
    <property type="term" value="P:maturation of LSU-rRNA from tricistronic rRNA transcript (SSU-rRNA, 5.8S rRNA, LSU-rRNA)"/>
    <property type="evidence" value="ECO:0000250"/>
    <property type="project" value="UniProtKB"/>
</dbReference>
<dbReference type="GO" id="GO:0051726">
    <property type="term" value="P:regulation of cell cycle"/>
    <property type="evidence" value="ECO:0000250"/>
    <property type="project" value="UniProtKB"/>
</dbReference>
<dbReference type="CDD" id="cd00200">
    <property type="entry name" value="WD40"/>
    <property type="match status" value="1"/>
</dbReference>
<dbReference type="FunFam" id="2.130.10.10:FF:000272">
    <property type="entry name" value="Ribosome biogenesis protein WDR12"/>
    <property type="match status" value="1"/>
</dbReference>
<dbReference type="Gene3D" id="2.130.10.10">
    <property type="entry name" value="YVTN repeat-like/Quinoprotein amine dehydrogenase"/>
    <property type="match status" value="1"/>
</dbReference>
<dbReference type="HAMAP" id="MF_03029">
    <property type="entry name" value="WDR12"/>
    <property type="match status" value="1"/>
</dbReference>
<dbReference type="InterPro" id="IPR020472">
    <property type="entry name" value="G-protein_beta_WD-40_rep"/>
</dbReference>
<dbReference type="InterPro" id="IPR012972">
    <property type="entry name" value="NLE"/>
</dbReference>
<dbReference type="InterPro" id="IPR015943">
    <property type="entry name" value="WD40/YVTN_repeat-like_dom_sf"/>
</dbReference>
<dbReference type="InterPro" id="IPR019775">
    <property type="entry name" value="WD40_repeat_CS"/>
</dbReference>
<dbReference type="InterPro" id="IPR036322">
    <property type="entry name" value="WD40_repeat_dom_sf"/>
</dbReference>
<dbReference type="InterPro" id="IPR001680">
    <property type="entry name" value="WD40_rpt"/>
</dbReference>
<dbReference type="InterPro" id="IPR028599">
    <property type="entry name" value="WDR12/Ytm1"/>
</dbReference>
<dbReference type="PANTHER" id="PTHR19855:SF11">
    <property type="entry name" value="RIBOSOME BIOGENESIS PROTEIN WDR12"/>
    <property type="match status" value="1"/>
</dbReference>
<dbReference type="PANTHER" id="PTHR19855">
    <property type="entry name" value="WD40 REPEAT PROTEIN 12, 37"/>
    <property type="match status" value="1"/>
</dbReference>
<dbReference type="Pfam" id="PF08154">
    <property type="entry name" value="NLE"/>
    <property type="match status" value="1"/>
</dbReference>
<dbReference type="Pfam" id="PF00400">
    <property type="entry name" value="WD40"/>
    <property type="match status" value="7"/>
</dbReference>
<dbReference type="PRINTS" id="PR00320">
    <property type="entry name" value="GPROTEINBRPT"/>
</dbReference>
<dbReference type="SMART" id="SM00320">
    <property type="entry name" value="WD40"/>
    <property type="match status" value="7"/>
</dbReference>
<dbReference type="SUPFAM" id="SSF50978">
    <property type="entry name" value="WD40 repeat-like"/>
    <property type="match status" value="1"/>
</dbReference>
<dbReference type="PROSITE" id="PS00678">
    <property type="entry name" value="WD_REPEATS_1"/>
    <property type="match status" value="2"/>
</dbReference>
<dbReference type="PROSITE" id="PS50082">
    <property type="entry name" value="WD_REPEATS_2"/>
    <property type="match status" value="6"/>
</dbReference>
<dbReference type="PROSITE" id="PS50294">
    <property type="entry name" value="WD_REPEATS_REGION"/>
    <property type="match status" value="1"/>
</dbReference>
<feature type="chain" id="PRO_0000369549" description="Ribosome biogenesis protein wdr12">
    <location>
        <begin position="1"/>
        <end position="423"/>
    </location>
</feature>
<feature type="repeat" description="WD 1">
    <location>
        <begin position="99"/>
        <end position="136"/>
    </location>
</feature>
<feature type="repeat" description="WD 2">
    <location>
        <begin position="138"/>
        <end position="180"/>
    </location>
</feature>
<feature type="repeat" description="WD 3">
    <location>
        <begin position="187"/>
        <end position="226"/>
    </location>
</feature>
<feature type="repeat" description="WD 4">
    <location>
        <begin position="255"/>
        <end position="293"/>
    </location>
</feature>
<feature type="repeat" description="WD 5">
    <location>
        <begin position="295"/>
        <end position="334"/>
    </location>
</feature>
<feature type="repeat" description="WD 6">
    <location>
        <begin position="340"/>
        <end position="380"/>
    </location>
</feature>
<feature type="repeat" description="WD 7">
    <location>
        <begin position="384"/>
        <end position="422"/>
    </location>
</feature>
<feature type="region of interest" description="Ubiquitin-like (UBL) domain" evidence="1">
    <location>
        <begin position="4"/>
        <end position="87"/>
    </location>
</feature>
<feature type="region of interest" description="Disordered" evidence="2">
    <location>
        <begin position="221"/>
        <end position="244"/>
    </location>
</feature>
<organism>
    <name type="scientific">Salmo salar</name>
    <name type="common">Atlantic salmon</name>
    <dbReference type="NCBI Taxonomy" id="8030"/>
    <lineage>
        <taxon>Eukaryota</taxon>
        <taxon>Metazoa</taxon>
        <taxon>Chordata</taxon>
        <taxon>Craniata</taxon>
        <taxon>Vertebrata</taxon>
        <taxon>Euteleostomi</taxon>
        <taxon>Actinopterygii</taxon>
        <taxon>Neopterygii</taxon>
        <taxon>Teleostei</taxon>
        <taxon>Protacanthopterygii</taxon>
        <taxon>Salmoniformes</taxon>
        <taxon>Salmonidae</taxon>
        <taxon>Salmoninae</taxon>
        <taxon>Salmo</taxon>
    </lineage>
</organism>
<name>WDR12_SALSA</name>
<gene>
    <name type="primary">wdr12</name>
</gene>
<accession>B5DG67</accession>
<evidence type="ECO:0000255" key="1">
    <source>
        <dbReference type="HAMAP-Rule" id="MF_03029"/>
    </source>
</evidence>
<evidence type="ECO:0000256" key="2">
    <source>
        <dbReference type="SAM" id="MobiDB-lite"/>
    </source>
</evidence>
<keyword id="KW-0539">Nucleus</keyword>
<keyword id="KW-1185">Reference proteome</keyword>
<keyword id="KW-0677">Repeat</keyword>
<keyword id="KW-0690">Ribosome biogenesis</keyword>
<keyword id="KW-0698">rRNA processing</keyword>
<keyword id="KW-0853">WD repeat</keyword>